<evidence type="ECO:0000255" key="1">
    <source>
        <dbReference type="HAMAP-Rule" id="MF_00137"/>
    </source>
</evidence>
<dbReference type="EC" id="6.3.2.6" evidence="1"/>
<dbReference type="EMBL" id="CP000698">
    <property type="protein sequence ID" value="ABQ27041.1"/>
    <property type="molecule type" value="Genomic_DNA"/>
</dbReference>
<dbReference type="RefSeq" id="WP_011939715.1">
    <property type="nucleotide sequence ID" value="NC_009483.1"/>
</dbReference>
<dbReference type="SMR" id="A5G5H3"/>
<dbReference type="STRING" id="351605.Gura_2868"/>
<dbReference type="KEGG" id="gur:Gura_2868"/>
<dbReference type="HOGENOM" id="CLU_045637_0_0_7"/>
<dbReference type="OrthoDB" id="9801549at2"/>
<dbReference type="UniPathway" id="UPA00074">
    <property type="reaction ID" value="UER00131"/>
</dbReference>
<dbReference type="Proteomes" id="UP000006695">
    <property type="component" value="Chromosome"/>
</dbReference>
<dbReference type="GO" id="GO:0005737">
    <property type="term" value="C:cytoplasm"/>
    <property type="evidence" value="ECO:0007669"/>
    <property type="project" value="TreeGrafter"/>
</dbReference>
<dbReference type="GO" id="GO:0005524">
    <property type="term" value="F:ATP binding"/>
    <property type="evidence" value="ECO:0007669"/>
    <property type="project" value="UniProtKB-KW"/>
</dbReference>
<dbReference type="GO" id="GO:0004639">
    <property type="term" value="F:phosphoribosylaminoimidazolesuccinocarboxamide synthase activity"/>
    <property type="evidence" value="ECO:0007669"/>
    <property type="project" value="UniProtKB-UniRule"/>
</dbReference>
<dbReference type="GO" id="GO:0006189">
    <property type="term" value="P:'de novo' IMP biosynthetic process"/>
    <property type="evidence" value="ECO:0007669"/>
    <property type="project" value="UniProtKB-UniRule"/>
</dbReference>
<dbReference type="CDD" id="cd01414">
    <property type="entry name" value="SAICAR_synt_Sc"/>
    <property type="match status" value="1"/>
</dbReference>
<dbReference type="FunFam" id="3.30.200.20:FF:000392">
    <property type="entry name" value="Phosphoribosylaminoimidazole-succinocarboxamide synthase"/>
    <property type="match status" value="1"/>
</dbReference>
<dbReference type="FunFam" id="3.30.470.20:FF:000015">
    <property type="entry name" value="Phosphoribosylaminoimidazole-succinocarboxamide synthase"/>
    <property type="match status" value="1"/>
</dbReference>
<dbReference type="Gene3D" id="3.30.470.20">
    <property type="entry name" value="ATP-grasp fold, B domain"/>
    <property type="match status" value="1"/>
</dbReference>
<dbReference type="Gene3D" id="3.30.200.20">
    <property type="entry name" value="Phosphorylase Kinase, domain 1"/>
    <property type="match status" value="1"/>
</dbReference>
<dbReference type="HAMAP" id="MF_00137">
    <property type="entry name" value="SAICAR_synth"/>
    <property type="match status" value="1"/>
</dbReference>
<dbReference type="InterPro" id="IPR028923">
    <property type="entry name" value="SAICAR_synt/ADE2_N"/>
</dbReference>
<dbReference type="InterPro" id="IPR001636">
    <property type="entry name" value="SAICAR_synth"/>
</dbReference>
<dbReference type="NCBIfam" id="NF010568">
    <property type="entry name" value="PRK13961.1"/>
    <property type="match status" value="1"/>
</dbReference>
<dbReference type="NCBIfam" id="TIGR00081">
    <property type="entry name" value="purC"/>
    <property type="match status" value="1"/>
</dbReference>
<dbReference type="PANTHER" id="PTHR43700">
    <property type="entry name" value="PHOSPHORIBOSYLAMINOIMIDAZOLE-SUCCINOCARBOXAMIDE SYNTHASE"/>
    <property type="match status" value="1"/>
</dbReference>
<dbReference type="PANTHER" id="PTHR43700:SF1">
    <property type="entry name" value="PHOSPHORIBOSYLAMINOIMIDAZOLE-SUCCINOCARBOXAMIDE SYNTHASE"/>
    <property type="match status" value="1"/>
</dbReference>
<dbReference type="Pfam" id="PF01259">
    <property type="entry name" value="SAICAR_synt"/>
    <property type="match status" value="1"/>
</dbReference>
<dbReference type="SUPFAM" id="SSF56104">
    <property type="entry name" value="SAICAR synthase-like"/>
    <property type="match status" value="1"/>
</dbReference>
<protein>
    <recommendedName>
        <fullName evidence="1">Phosphoribosylaminoimidazole-succinocarboxamide synthase</fullName>
        <ecNumber evidence="1">6.3.2.6</ecNumber>
    </recommendedName>
    <alternativeName>
        <fullName evidence="1">SAICAR synthetase</fullName>
    </alternativeName>
</protein>
<comment type="catalytic activity">
    <reaction evidence="1">
        <text>5-amino-1-(5-phospho-D-ribosyl)imidazole-4-carboxylate + L-aspartate + ATP = (2S)-2-[5-amino-1-(5-phospho-beta-D-ribosyl)imidazole-4-carboxamido]succinate + ADP + phosphate + 2 H(+)</text>
        <dbReference type="Rhea" id="RHEA:22628"/>
        <dbReference type="ChEBI" id="CHEBI:15378"/>
        <dbReference type="ChEBI" id="CHEBI:29991"/>
        <dbReference type="ChEBI" id="CHEBI:30616"/>
        <dbReference type="ChEBI" id="CHEBI:43474"/>
        <dbReference type="ChEBI" id="CHEBI:58443"/>
        <dbReference type="ChEBI" id="CHEBI:77657"/>
        <dbReference type="ChEBI" id="CHEBI:456216"/>
        <dbReference type="EC" id="6.3.2.6"/>
    </reaction>
</comment>
<comment type="pathway">
    <text evidence="1">Purine metabolism; IMP biosynthesis via de novo pathway; 5-amino-1-(5-phospho-D-ribosyl)imidazole-4-carboxamide from 5-amino-1-(5-phospho-D-ribosyl)imidazole-4-carboxylate: step 1/2.</text>
</comment>
<comment type="similarity">
    <text evidence="1">Belongs to the SAICAR synthetase family.</text>
</comment>
<feature type="chain" id="PRO_1000076454" description="Phosphoribosylaminoimidazole-succinocarboxamide synthase">
    <location>
        <begin position="1"/>
        <end position="296"/>
    </location>
</feature>
<sequence>MSKLVLTTDFPDLKLAARGKVRDIYDLGETLLIVTTDRISAFDVIMNEGIPDKGYVLTQISAFWFRQMEDIIPNHIISTEVKDFPAECQKYADVLEGRSMLVKKAKPLPAECIVRGYISGSGWKDYQATGSVCGITLPAGLKESDRLPEPIFTPSTKAELGTHDENISFEKMVDMCGKDIAEKVRDITLKIYKKARDIADGKGIIIADTKFEYGIYEGELIIIDECMTPDSSRFWPKDSYQPGGPQPSFDKQFLRDYLETLDWDKTAPAPPLPEEIVRKTGEKYMEALVKLTGKGK</sequence>
<organism>
    <name type="scientific">Geotalea uraniireducens (strain Rf4)</name>
    <name type="common">Geobacter uraniireducens</name>
    <dbReference type="NCBI Taxonomy" id="351605"/>
    <lineage>
        <taxon>Bacteria</taxon>
        <taxon>Pseudomonadati</taxon>
        <taxon>Thermodesulfobacteriota</taxon>
        <taxon>Desulfuromonadia</taxon>
        <taxon>Geobacterales</taxon>
        <taxon>Geobacteraceae</taxon>
        <taxon>Geotalea</taxon>
    </lineage>
</organism>
<keyword id="KW-0067">ATP-binding</keyword>
<keyword id="KW-0436">Ligase</keyword>
<keyword id="KW-0547">Nucleotide-binding</keyword>
<keyword id="KW-0658">Purine biosynthesis</keyword>
<keyword id="KW-1185">Reference proteome</keyword>
<accession>A5G5H3</accession>
<proteinExistence type="inferred from homology"/>
<reference key="1">
    <citation type="submission" date="2007-05" db="EMBL/GenBank/DDBJ databases">
        <title>Complete sequence of Geobacter uraniireducens Rf4.</title>
        <authorList>
            <consortium name="US DOE Joint Genome Institute"/>
            <person name="Copeland A."/>
            <person name="Lucas S."/>
            <person name="Lapidus A."/>
            <person name="Barry K."/>
            <person name="Detter J.C."/>
            <person name="Glavina del Rio T."/>
            <person name="Hammon N."/>
            <person name="Israni S."/>
            <person name="Dalin E."/>
            <person name="Tice H."/>
            <person name="Pitluck S."/>
            <person name="Chertkov O."/>
            <person name="Brettin T."/>
            <person name="Bruce D."/>
            <person name="Han C."/>
            <person name="Schmutz J."/>
            <person name="Larimer F."/>
            <person name="Land M."/>
            <person name="Hauser L."/>
            <person name="Kyrpides N."/>
            <person name="Mikhailova N."/>
            <person name="Shelobolina E."/>
            <person name="Aklujkar M."/>
            <person name="Lovley D."/>
            <person name="Richardson P."/>
        </authorList>
    </citation>
    <scope>NUCLEOTIDE SEQUENCE [LARGE SCALE GENOMIC DNA]</scope>
    <source>
        <strain>ATCC BAA-1134 / JCM 13001 / Rf4</strain>
    </source>
</reference>
<name>PUR7_GEOUR</name>
<gene>
    <name evidence="1" type="primary">purC</name>
    <name type="ordered locus">Gura_2868</name>
</gene>